<gene>
    <name evidence="6" type="ordered locus">At2g40290</name>
</gene>
<feature type="chain" id="PRO_0000437154" description="Eukaryotic translation initiation factor 2 subunit alpha homolog">
    <location>
        <begin position="1"/>
        <end position="344"/>
    </location>
</feature>
<feature type="domain" description="S1 motif" evidence="2">
    <location>
        <begin position="21"/>
        <end position="92"/>
    </location>
</feature>
<feature type="region of interest" description="Disordered" evidence="3">
    <location>
        <begin position="312"/>
        <end position="344"/>
    </location>
</feature>
<feature type="compositionally biased region" description="Acidic residues" evidence="3">
    <location>
        <begin position="314"/>
        <end position="336"/>
    </location>
</feature>
<feature type="modified residue" description="Phosphoserine; by GCN2" evidence="5">
    <location>
        <position position="56"/>
    </location>
</feature>
<feature type="sequence conflict" description="In Ref. 4; AAM61752." evidence="4" ref="4">
    <original>R</original>
    <variation>K</variation>
    <location>
        <position position="93"/>
    </location>
</feature>
<evidence type="ECO:0000250" key="1">
    <source>
        <dbReference type="UniProtKB" id="P20459"/>
    </source>
</evidence>
<evidence type="ECO:0000255" key="2">
    <source>
        <dbReference type="PROSITE-ProRule" id="PRU00180"/>
    </source>
</evidence>
<evidence type="ECO:0000256" key="3">
    <source>
        <dbReference type="SAM" id="MobiDB-lite"/>
    </source>
</evidence>
<evidence type="ECO:0000305" key="4"/>
<evidence type="ECO:0000305" key="5">
    <source>
    </source>
</evidence>
<evidence type="ECO:0000312" key="6">
    <source>
        <dbReference type="Araport" id="AT2G40290"/>
    </source>
</evidence>
<organism>
    <name type="scientific">Arabidopsis thaliana</name>
    <name type="common">Mouse-ear cress</name>
    <dbReference type="NCBI Taxonomy" id="3702"/>
    <lineage>
        <taxon>Eukaryota</taxon>
        <taxon>Viridiplantae</taxon>
        <taxon>Streptophyta</taxon>
        <taxon>Embryophyta</taxon>
        <taxon>Tracheophyta</taxon>
        <taxon>Spermatophyta</taxon>
        <taxon>Magnoliopsida</taxon>
        <taxon>eudicotyledons</taxon>
        <taxon>Gunneridae</taxon>
        <taxon>Pentapetalae</taxon>
        <taxon>rosids</taxon>
        <taxon>malvids</taxon>
        <taxon>Brassicales</taxon>
        <taxon>Brassicaceae</taxon>
        <taxon>Camelineae</taxon>
        <taxon>Arabidopsis</taxon>
    </lineage>
</organism>
<keyword id="KW-0025">Alternative splicing</keyword>
<keyword id="KW-0396">Initiation factor</keyword>
<keyword id="KW-0597">Phosphoprotein</keyword>
<keyword id="KW-0648">Protein biosynthesis</keyword>
<keyword id="KW-1185">Reference proteome</keyword>
<accession>Q9SIZ2</accession>
<accession>Q8LEV8</accession>
<sequence length="344" mass="38748">MASQTPNLECRMYEAKYPEVDMAVMIQVKNIADMGAYVSLLEYNNIEGMILFSELSRRRIRSVSSLIKVGRIEPVMVLRVDKEKGYIDLSKRRVSEEDIQTCEERYNKSKLVHSIMRHVAETLSIDLEDLYVNIGWPLYRRHGHAFEAFKILVTDPDSVLGPLTREIKEVGPDGQEVTKVVPAVTEEVKDALVKNIRRRMTPQPMKIRADIELKCFQFDGVVHIKEAMKNAEAAGNEDCPVKIKLVAPPLYVLTTQTLDKEQGIEILNKAIAACTETIETHKGKLVVKEGARAVSERDEKMLTEHMAKLRLDNEEMSGDEDSGDEEEDTGMGEVDLDAGAGIIE</sequence>
<comment type="function">
    <text evidence="1">Functions in the early steps of protein synthesis by forming a ternary complex with GTP and initiator tRNA. This complex binds to a 40S ribosomal subunit, followed by mRNA binding to form a 43S pre-initiation complex. Junction of the 60S ribosomal subunit to form the 80S initiation complex is preceded by hydrolysis of the GTP bound to eIF-2 and release of an eIF-2-GDP binary complex. In order for eIF-2 to recycle and catalyze another round of initiation, the GDP bound to eIF-2 must exchange with GTP by way of a reaction catalyzed by eIF-2B.</text>
</comment>
<comment type="subunit">
    <text evidence="1">Heterotrimer composed of an alpha, a beta and a gamma chain.</text>
</comment>
<comment type="alternative products">
    <event type="alternative splicing"/>
    <isoform>
        <id>Q9SIZ2-1</id>
        <name>1</name>
        <sequence type="displayed"/>
    </isoform>
    <text evidence="4">A number of isoforms are produced. According to EST sequences.</text>
</comment>
<comment type="PTM">
    <text evidence="5">Phosphorylated at Ser-56 by GCN2.</text>
</comment>
<comment type="similarity">
    <text evidence="4">Belongs to the eIF-2-alpha family.</text>
</comment>
<protein>
    <recommendedName>
        <fullName evidence="4">Eukaryotic translation initiation factor 2 subunit alpha homolog</fullName>
    </recommendedName>
</protein>
<dbReference type="EMBL" id="AC007020">
    <property type="protein sequence ID" value="AAD25664.2"/>
    <property type="molecule type" value="Genomic_DNA"/>
</dbReference>
<dbReference type="EMBL" id="CP002685">
    <property type="protein sequence ID" value="AEC09807.1"/>
    <property type="molecule type" value="Genomic_DNA"/>
</dbReference>
<dbReference type="EMBL" id="AY080668">
    <property type="protein sequence ID" value="AAL86344.1"/>
    <property type="molecule type" value="mRNA"/>
</dbReference>
<dbReference type="EMBL" id="AY117188">
    <property type="protein sequence ID" value="AAM51263.1"/>
    <property type="molecule type" value="mRNA"/>
</dbReference>
<dbReference type="EMBL" id="AY085202">
    <property type="protein sequence ID" value="AAM61752.1"/>
    <property type="molecule type" value="mRNA"/>
</dbReference>
<dbReference type="PIR" id="F84827">
    <property type="entry name" value="F84827"/>
</dbReference>
<dbReference type="RefSeq" id="NP_565927.1">
    <molecule id="Q9SIZ2-1"/>
    <property type="nucleotide sequence ID" value="NM_129587.3"/>
</dbReference>
<dbReference type="SMR" id="Q9SIZ2"/>
<dbReference type="FunCoup" id="Q9SIZ2">
    <property type="interactions" value="4650"/>
</dbReference>
<dbReference type="IntAct" id="Q9SIZ2">
    <property type="interactions" value="1"/>
</dbReference>
<dbReference type="STRING" id="3702.Q9SIZ2"/>
<dbReference type="iPTMnet" id="Q9SIZ2"/>
<dbReference type="PaxDb" id="3702-AT2G40290.1"/>
<dbReference type="ProteomicsDB" id="232148">
    <molecule id="Q9SIZ2-1"/>
</dbReference>
<dbReference type="EnsemblPlants" id="AT2G40290.1">
    <molecule id="Q9SIZ2-1"/>
    <property type="protein sequence ID" value="AT2G40290.1"/>
    <property type="gene ID" value="AT2G40290"/>
</dbReference>
<dbReference type="GeneID" id="818621"/>
<dbReference type="Gramene" id="AT2G40290.1">
    <molecule id="Q9SIZ2-1"/>
    <property type="protein sequence ID" value="AT2G40290.1"/>
    <property type="gene ID" value="AT2G40290"/>
</dbReference>
<dbReference type="KEGG" id="ath:AT2G40290"/>
<dbReference type="Araport" id="AT2G40290"/>
<dbReference type="TAIR" id="AT2G40290"/>
<dbReference type="eggNOG" id="KOG2916">
    <property type="taxonomic scope" value="Eukaryota"/>
</dbReference>
<dbReference type="HOGENOM" id="CLU_033458_0_1_1"/>
<dbReference type="InParanoid" id="Q9SIZ2"/>
<dbReference type="OMA" id="DVNEHQR"/>
<dbReference type="OrthoDB" id="1685042at2759"/>
<dbReference type="PhylomeDB" id="Q9SIZ2"/>
<dbReference type="CD-CODE" id="4299E36E">
    <property type="entry name" value="Nucleolus"/>
</dbReference>
<dbReference type="PRO" id="PR:Q9SIZ2"/>
<dbReference type="Proteomes" id="UP000006548">
    <property type="component" value="Chromosome 2"/>
</dbReference>
<dbReference type="ExpressionAtlas" id="Q9SIZ2">
    <property type="expression patterns" value="baseline and differential"/>
</dbReference>
<dbReference type="GO" id="GO:0005794">
    <property type="term" value="C:Golgi apparatus"/>
    <property type="evidence" value="ECO:0007005"/>
    <property type="project" value="TAIR"/>
</dbReference>
<dbReference type="GO" id="GO:0005634">
    <property type="term" value="C:nucleus"/>
    <property type="evidence" value="ECO:0007005"/>
    <property type="project" value="TAIR"/>
</dbReference>
<dbReference type="GO" id="GO:0003729">
    <property type="term" value="F:mRNA binding"/>
    <property type="evidence" value="ECO:0007005"/>
    <property type="project" value="TAIR"/>
</dbReference>
<dbReference type="GO" id="GO:0003743">
    <property type="term" value="F:translation initiation factor activity"/>
    <property type="evidence" value="ECO:0007669"/>
    <property type="project" value="UniProtKB-KW"/>
</dbReference>
<dbReference type="CDD" id="cd04452">
    <property type="entry name" value="S1_IF2_alpha"/>
    <property type="match status" value="1"/>
</dbReference>
<dbReference type="FunFam" id="3.30.70.1130:FF:000001">
    <property type="entry name" value="Eukaryotic translation initiation factor 2 subunit 1"/>
    <property type="match status" value="1"/>
</dbReference>
<dbReference type="FunFam" id="1.10.150.190:FF:000003">
    <property type="entry name" value="Eukaryotic translation initiation factor 2 subunit alpha"/>
    <property type="match status" value="1"/>
</dbReference>
<dbReference type="FunFam" id="2.40.50.140:FF:000015">
    <property type="entry name" value="Eukaryotic translation initiation factor 2 subunit alpha"/>
    <property type="match status" value="1"/>
</dbReference>
<dbReference type="Gene3D" id="3.30.70.1130">
    <property type="entry name" value="EIF_2_alpha"/>
    <property type="match status" value="1"/>
</dbReference>
<dbReference type="Gene3D" id="2.40.50.140">
    <property type="entry name" value="Nucleic acid-binding proteins"/>
    <property type="match status" value="1"/>
</dbReference>
<dbReference type="Gene3D" id="1.10.150.190">
    <property type="entry name" value="Translation initiation factor 2, subunit 1, domain 2"/>
    <property type="match status" value="1"/>
</dbReference>
<dbReference type="InterPro" id="IPR012340">
    <property type="entry name" value="NA-bd_OB-fold"/>
</dbReference>
<dbReference type="InterPro" id="IPR003029">
    <property type="entry name" value="S1_domain"/>
</dbReference>
<dbReference type="InterPro" id="IPR044126">
    <property type="entry name" value="S1_IF2_alpha"/>
</dbReference>
<dbReference type="InterPro" id="IPR024055">
    <property type="entry name" value="TIF2_asu_C"/>
</dbReference>
<dbReference type="InterPro" id="IPR024054">
    <property type="entry name" value="TIF2_asu_middle_sf"/>
</dbReference>
<dbReference type="InterPro" id="IPR011488">
    <property type="entry name" value="TIF_2_asu"/>
</dbReference>
<dbReference type="PANTHER" id="PTHR10602">
    <property type="entry name" value="EUKARYOTIC TRANSLATION INITIATION FACTOR 2 SUBUNIT 1"/>
    <property type="match status" value="1"/>
</dbReference>
<dbReference type="PANTHER" id="PTHR10602:SF0">
    <property type="entry name" value="EUKARYOTIC TRANSLATION INITIATION FACTOR 2 SUBUNIT 1"/>
    <property type="match status" value="1"/>
</dbReference>
<dbReference type="Pfam" id="PF07541">
    <property type="entry name" value="EIF_2_alpha"/>
    <property type="match status" value="1"/>
</dbReference>
<dbReference type="Pfam" id="PF00575">
    <property type="entry name" value="S1"/>
    <property type="match status" value="1"/>
</dbReference>
<dbReference type="SMART" id="SM00316">
    <property type="entry name" value="S1"/>
    <property type="match status" value="1"/>
</dbReference>
<dbReference type="SUPFAM" id="SSF110993">
    <property type="entry name" value="eIF-2-alpha, C-terminal domain"/>
    <property type="match status" value="1"/>
</dbReference>
<dbReference type="SUPFAM" id="SSF116742">
    <property type="entry name" value="eIF2alpha middle domain-like"/>
    <property type="match status" value="1"/>
</dbReference>
<dbReference type="SUPFAM" id="SSF50249">
    <property type="entry name" value="Nucleic acid-binding proteins"/>
    <property type="match status" value="1"/>
</dbReference>
<dbReference type="PROSITE" id="PS50126">
    <property type="entry name" value="S1"/>
    <property type="match status" value="1"/>
</dbReference>
<name>IF2AH_ARATH</name>
<proteinExistence type="evidence at protein level"/>
<reference key="1">
    <citation type="journal article" date="1999" name="Nature">
        <title>Sequence and analysis of chromosome 2 of the plant Arabidopsis thaliana.</title>
        <authorList>
            <person name="Lin X."/>
            <person name="Kaul S."/>
            <person name="Rounsley S.D."/>
            <person name="Shea T.P."/>
            <person name="Benito M.-I."/>
            <person name="Town C.D."/>
            <person name="Fujii C.Y."/>
            <person name="Mason T.M."/>
            <person name="Bowman C.L."/>
            <person name="Barnstead M.E."/>
            <person name="Feldblyum T.V."/>
            <person name="Buell C.R."/>
            <person name="Ketchum K.A."/>
            <person name="Lee J.J."/>
            <person name="Ronning C.M."/>
            <person name="Koo H.L."/>
            <person name="Moffat K.S."/>
            <person name="Cronin L.A."/>
            <person name="Shen M."/>
            <person name="Pai G."/>
            <person name="Van Aken S."/>
            <person name="Umayam L."/>
            <person name="Tallon L.J."/>
            <person name="Gill J.E."/>
            <person name="Adams M.D."/>
            <person name="Carrera A.J."/>
            <person name="Creasy T.H."/>
            <person name="Goodman H.M."/>
            <person name="Somerville C.R."/>
            <person name="Copenhaver G.P."/>
            <person name="Preuss D."/>
            <person name="Nierman W.C."/>
            <person name="White O."/>
            <person name="Eisen J.A."/>
            <person name="Salzberg S.L."/>
            <person name="Fraser C.M."/>
            <person name="Venter J.C."/>
        </authorList>
    </citation>
    <scope>NUCLEOTIDE SEQUENCE [LARGE SCALE GENOMIC DNA]</scope>
    <source>
        <strain>cv. Columbia</strain>
    </source>
</reference>
<reference key="2">
    <citation type="journal article" date="2017" name="Plant J.">
        <title>Araport11: a complete reannotation of the Arabidopsis thaliana reference genome.</title>
        <authorList>
            <person name="Cheng C.Y."/>
            <person name="Krishnakumar V."/>
            <person name="Chan A.P."/>
            <person name="Thibaud-Nissen F."/>
            <person name="Schobel S."/>
            <person name="Town C.D."/>
        </authorList>
    </citation>
    <scope>GENOME REANNOTATION</scope>
    <source>
        <strain>cv. Columbia</strain>
    </source>
</reference>
<reference key="3">
    <citation type="journal article" date="2003" name="Science">
        <title>Empirical analysis of transcriptional activity in the Arabidopsis genome.</title>
        <authorList>
            <person name="Yamada K."/>
            <person name="Lim J."/>
            <person name="Dale J.M."/>
            <person name="Chen H."/>
            <person name="Shinn P."/>
            <person name="Palm C.J."/>
            <person name="Southwick A.M."/>
            <person name="Wu H.C."/>
            <person name="Kim C.J."/>
            <person name="Nguyen M."/>
            <person name="Pham P.K."/>
            <person name="Cheuk R.F."/>
            <person name="Karlin-Newmann G."/>
            <person name="Liu S.X."/>
            <person name="Lam B."/>
            <person name="Sakano H."/>
            <person name="Wu T."/>
            <person name="Yu G."/>
            <person name="Miranda M."/>
            <person name="Quach H.L."/>
            <person name="Tripp M."/>
            <person name="Chang C.H."/>
            <person name="Lee J.M."/>
            <person name="Toriumi M.J."/>
            <person name="Chan M.M."/>
            <person name="Tang C.C."/>
            <person name="Onodera C.S."/>
            <person name="Deng J.M."/>
            <person name="Akiyama K."/>
            <person name="Ansari Y."/>
            <person name="Arakawa T."/>
            <person name="Banh J."/>
            <person name="Banno F."/>
            <person name="Bowser L."/>
            <person name="Brooks S.Y."/>
            <person name="Carninci P."/>
            <person name="Chao Q."/>
            <person name="Choy N."/>
            <person name="Enju A."/>
            <person name="Goldsmith A.D."/>
            <person name="Gurjal M."/>
            <person name="Hansen N.F."/>
            <person name="Hayashizaki Y."/>
            <person name="Johnson-Hopson C."/>
            <person name="Hsuan V.W."/>
            <person name="Iida K."/>
            <person name="Karnes M."/>
            <person name="Khan S."/>
            <person name="Koesema E."/>
            <person name="Ishida J."/>
            <person name="Jiang P.X."/>
            <person name="Jones T."/>
            <person name="Kawai J."/>
            <person name="Kamiya A."/>
            <person name="Meyers C."/>
            <person name="Nakajima M."/>
            <person name="Narusaka M."/>
            <person name="Seki M."/>
            <person name="Sakurai T."/>
            <person name="Satou M."/>
            <person name="Tamse R."/>
            <person name="Vaysberg M."/>
            <person name="Wallender E.K."/>
            <person name="Wong C."/>
            <person name="Yamamura Y."/>
            <person name="Yuan S."/>
            <person name="Shinozaki K."/>
            <person name="Davis R.W."/>
            <person name="Theologis A."/>
            <person name="Ecker J.R."/>
        </authorList>
    </citation>
    <scope>NUCLEOTIDE SEQUENCE [LARGE SCALE MRNA]</scope>
    <source>
        <strain>cv. Columbia</strain>
    </source>
</reference>
<reference key="4">
    <citation type="submission" date="2002-03" db="EMBL/GenBank/DDBJ databases">
        <title>Full-length cDNA from Arabidopsis thaliana.</title>
        <authorList>
            <person name="Brover V.V."/>
            <person name="Troukhan M.E."/>
            <person name="Alexandrov N.A."/>
            <person name="Lu Y.-P."/>
            <person name="Flavell R.B."/>
            <person name="Feldmann K.A."/>
        </authorList>
    </citation>
    <scope>NUCLEOTIDE SEQUENCE [LARGE SCALE MRNA]</scope>
</reference>
<reference key="5">
    <citation type="journal article" date="2007" name="Mol. Cell. Proteomics">
        <title>Multidimensional protein identification technology (MudPIT) analysis of ubiquitinated proteins in plants.</title>
        <authorList>
            <person name="Maor R."/>
            <person name="Jones A."/>
            <person name="Nuehse T.S."/>
            <person name="Studholme D.J."/>
            <person name="Peck S.C."/>
            <person name="Shirasu K."/>
        </authorList>
    </citation>
    <scope>IDENTIFICATION BY MASS SPECTROMETRY [LARGE SCALE ANALYSIS]</scope>
    <source>
        <strain>cv. Landsberg erecta</strain>
    </source>
</reference>
<reference key="6">
    <citation type="journal article" date="2013" name="Plant Biol.">
        <title>The GCN2 homologue in Arabidopsis thaliana interacts with uncharged tRNA and uses Arabidopsis eIF2alpha molecules as direct substrates.</title>
        <authorList>
            <person name="Li M.W."/>
            <person name="Auyeung W.K."/>
            <person name="Lam H.M."/>
        </authorList>
    </citation>
    <scope>PHOSPHORYLATION AT SER-56</scope>
</reference>